<comment type="function">
    <text evidence="1">Rab9 effector required for endosome to trans-Golgi network (TGN) transport.</text>
</comment>
<comment type="subunit">
    <text evidence="1">Interacts with PIKFYVE; the interaction recruits RABEPK to the endosomal membrane. Interacts with RAB9 in its GTP-bound conformation.</text>
</comment>
<comment type="subcellular location">
    <subcellularLocation>
        <location evidence="1">Cytoplasm</location>
    </subcellularLocation>
    <subcellularLocation>
        <location evidence="1">Endosome membrane</location>
    </subcellularLocation>
    <text evidence="1">Interaction with PIKFYVE and subsequent phosphorylation recruits it to the endosomal membrane.</text>
</comment>
<comment type="PTM">
    <text evidence="1">Phosphorylated on Ser residues by PIKFYVE.</text>
</comment>
<evidence type="ECO:0000250" key="1">
    <source>
        <dbReference type="UniProtKB" id="Q7Z6M1"/>
    </source>
</evidence>
<evidence type="ECO:0000256" key="2">
    <source>
        <dbReference type="SAM" id="MobiDB-lite"/>
    </source>
</evidence>
<dbReference type="EMBL" id="BT020719">
    <property type="protein sequence ID" value="AAX08736.1"/>
    <property type="molecule type" value="mRNA"/>
</dbReference>
<dbReference type="EMBL" id="BT021185">
    <property type="protein sequence ID" value="AAX31367.1"/>
    <property type="molecule type" value="mRNA"/>
</dbReference>
<dbReference type="EMBL" id="BC111169">
    <property type="protein sequence ID" value="AAI11170.1"/>
    <property type="molecule type" value="mRNA"/>
</dbReference>
<dbReference type="RefSeq" id="NP_001030476.1">
    <property type="nucleotide sequence ID" value="NM_001035399.1"/>
</dbReference>
<dbReference type="RefSeq" id="XP_059747308.1">
    <property type="nucleotide sequence ID" value="XM_059891325.1"/>
</dbReference>
<dbReference type="RefSeq" id="XP_059747309.1">
    <property type="nucleotide sequence ID" value="XM_059891326.1"/>
</dbReference>
<dbReference type="SMR" id="Q5EA50"/>
<dbReference type="FunCoup" id="Q5EA50">
    <property type="interactions" value="1752"/>
</dbReference>
<dbReference type="STRING" id="9913.ENSBTAP00000066540"/>
<dbReference type="PaxDb" id="9913-ENSBTAP00000020093"/>
<dbReference type="GeneID" id="533613"/>
<dbReference type="KEGG" id="bta:533613"/>
<dbReference type="CTD" id="10244"/>
<dbReference type="VEuPathDB" id="HostDB:ENSBTAG00000015098"/>
<dbReference type="eggNOG" id="KOG0379">
    <property type="taxonomic scope" value="Eukaryota"/>
</dbReference>
<dbReference type="HOGENOM" id="CLU_045313_0_0_1"/>
<dbReference type="InParanoid" id="Q5EA50"/>
<dbReference type="OMA" id="CTPGSIW"/>
<dbReference type="OrthoDB" id="10251809at2759"/>
<dbReference type="TreeFam" id="TF329153"/>
<dbReference type="Reactome" id="R-BTA-6811440">
    <property type="pathway name" value="Retrograde transport at the Trans-Golgi-Network"/>
</dbReference>
<dbReference type="Proteomes" id="UP000009136">
    <property type="component" value="Chromosome 11"/>
</dbReference>
<dbReference type="Bgee" id="ENSBTAG00000015098">
    <property type="expression patterns" value="Expressed in semen and 105 other cell types or tissues"/>
</dbReference>
<dbReference type="GO" id="GO:0010008">
    <property type="term" value="C:endosome membrane"/>
    <property type="evidence" value="ECO:0007669"/>
    <property type="project" value="UniProtKB-SubCell"/>
</dbReference>
<dbReference type="Gene3D" id="2.120.10.80">
    <property type="entry name" value="Kelch-type beta propeller"/>
    <property type="match status" value="2"/>
</dbReference>
<dbReference type="InterPro" id="IPR015915">
    <property type="entry name" value="Kelch-typ_b-propeller"/>
</dbReference>
<dbReference type="InterPro" id="IPR052124">
    <property type="entry name" value="Rab9_kelch_effector"/>
</dbReference>
<dbReference type="PANTHER" id="PTHR46647">
    <property type="entry name" value="RAB9 EFFECTOR PROTEIN WITH KELCH MOTIFS"/>
    <property type="match status" value="1"/>
</dbReference>
<dbReference type="PANTHER" id="PTHR46647:SF1">
    <property type="entry name" value="RAB9 EFFECTOR PROTEIN WITH KELCH MOTIFS"/>
    <property type="match status" value="1"/>
</dbReference>
<dbReference type="Pfam" id="PF24681">
    <property type="entry name" value="Kelch_KLHDC2_KLHL20_DRC7"/>
    <property type="match status" value="1"/>
</dbReference>
<dbReference type="SUPFAM" id="SSF117281">
    <property type="entry name" value="Kelch motif"/>
    <property type="match status" value="1"/>
</dbReference>
<gene>
    <name type="primary">RABEPK</name>
</gene>
<protein>
    <recommendedName>
        <fullName>Rab9 effector protein with kelch motifs</fullName>
    </recommendedName>
</protein>
<reference key="1">
    <citation type="journal article" date="2005" name="BMC Genomics">
        <title>Characterization of 954 bovine full-CDS cDNA sequences.</title>
        <authorList>
            <person name="Harhay G.P."/>
            <person name="Sonstegard T.S."/>
            <person name="Keele J.W."/>
            <person name="Heaton M.P."/>
            <person name="Clawson M.L."/>
            <person name="Snelling W.M."/>
            <person name="Wiedmann R.T."/>
            <person name="Van Tassell C.P."/>
            <person name="Smith T.P.L."/>
        </authorList>
    </citation>
    <scope>NUCLEOTIDE SEQUENCE [LARGE SCALE MRNA]</scope>
</reference>
<reference key="2">
    <citation type="submission" date="2005-12" db="EMBL/GenBank/DDBJ databases">
        <authorList>
            <consortium name="NIH - Mammalian Gene Collection (MGC) project"/>
        </authorList>
    </citation>
    <scope>NUCLEOTIDE SEQUENCE [LARGE SCALE MRNA]</scope>
    <source>
        <strain>Crossbred X Angus</strain>
        <tissue>Liver</tissue>
    </source>
</reference>
<name>RABEK_BOVIN</name>
<feature type="chain" id="PRO_0000280615" description="Rab9 effector protein with kelch motifs">
    <location>
        <begin position="1"/>
        <end position="372"/>
    </location>
</feature>
<feature type="repeat" description="Kelch 1">
    <location>
        <begin position="49"/>
        <end position="95"/>
    </location>
</feature>
<feature type="repeat" description="Kelch 2">
    <location>
        <begin position="100"/>
        <end position="146"/>
    </location>
</feature>
<feature type="repeat" description="Kelch 3">
    <location>
        <begin position="151"/>
        <end position="203"/>
    </location>
</feature>
<feature type="repeat" description="Kelch 4">
    <location>
        <begin position="204"/>
        <end position="250"/>
    </location>
</feature>
<feature type="repeat" description="Kelch 5">
    <location>
        <begin position="254"/>
        <end position="303"/>
    </location>
</feature>
<feature type="repeat" description="Kelch 6">
    <location>
        <begin position="349"/>
        <end position="372"/>
    </location>
</feature>
<feature type="region of interest" description="Disordered" evidence="2">
    <location>
        <begin position="309"/>
        <end position="341"/>
    </location>
</feature>
<feature type="compositionally biased region" description="Basic and acidic residues" evidence="2">
    <location>
        <begin position="321"/>
        <end position="330"/>
    </location>
</feature>
<accession>Q5EA50</accession>
<organism>
    <name type="scientific">Bos taurus</name>
    <name type="common">Bovine</name>
    <dbReference type="NCBI Taxonomy" id="9913"/>
    <lineage>
        <taxon>Eukaryota</taxon>
        <taxon>Metazoa</taxon>
        <taxon>Chordata</taxon>
        <taxon>Craniata</taxon>
        <taxon>Vertebrata</taxon>
        <taxon>Euteleostomi</taxon>
        <taxon>Mammalia</taxon>
        <taxon>Eutheria</taxon>
        <taxon>Laurasiatheria</taxon>
        <taxon>Artiodactyla</taxon>
        <taxon>Ruminantia</taxon>
        <taxon>Pecora</taxon>
        <taxon>Bovidae</taxon>
        <taxon>Bovinae</taxon>
        <taxon>Bos</taxon>
    </lineage>
</organism>
<sequence length="372" mass="40362">MKQLPVLEPGDKPRKETWYTLTLVGDSPCARVGHSCSYLPPVGDAERGKVFIVGGADPNRSFSDVHTIDLGTHQWDLATSEGLLPRYEHTSFIPSCTPHSIWVFGGADQSGNRNCLQVLNPDTRTWTTPEVTGPPPSPRTFHTSSAAIGDQLYVFGGGERGAQPVQDVQLHVFDANTLTWSQPETHGKPPSPRHGHVMVAAGTKLFIHGGLAGDNFYDDLHCIDISDMKWQKLRPTGAAPTGCAAHSAVAVGKHLYVFGGMTPTGALNTMYQYHIEKQHWTLLKFENSPPTGRLDHSMCIIPWPGTCTSEKEDSNSATVNRDAEKGDSTEKGVTQGGDSQEESQADTLLCFVFGGMNTEGEIYDDCIVTAVD</sequence>
<proteinExistence type="evidence at transcript level"/>
<keyword id="KW-0963">Cytoplasm</keyword>
<keyword id="KW-0967">Endosome</keyword>
<keyword id="KW-0880">Kelch repeat</keyword>
<keyword id="KW-0472">Membrane</keyword>
<keyword id="KW-0597">Phosphoprotein</keyword>
<keyword id="KW-1185">Reference proteome</keyword>
<keyword id="KW-0677">Repeat</keyword>